<proteinExistence type="inferred from homology"/>
<organism>
    <name type="scientific">Desulfitobacterium hafniense (strain Y51)</name>
    <dbReference type="NCBI Taxonomy" id="138119"/>
    <lineage>
        <taxon>Bacteria</taxon>
        <taxon>Bacillati</taxon>
        <taxon>Bacillota</taxon>
        <taxon>Clostridia</taxon>
        <taxon>Eubacteriales</taxon>
        <taxon>Desulfitobacteriaceae</taxon>
        <taxon>Desulfitobacterium</taxon>
    </lineage>
</organism>
<name>MURC_DESHY</name>
<dbReference type="EC" id="6.3.2.8" evidence="1"/>
<dbReference type="EMBL" id="AP008230">
    <property type="protein sequence ID" value="BAE82581.1"/>
    <property type="status" value="ALT_INIT"/>
    <property type="molecule type" value="Genomic_DNA"/>
</dbReference>
<dbReference type="RefSeq" id="WP_018214193.1">
    <property type="nucleotide sequence ID" value="NC_007907.1"/>
</dbReference>
<dbReference type="SMR" id="Q24ZG1"/>
<dbReference type="STRING" id="138119.DSY0792"/>
<dbReference type="KEGG" id="dsy:DSY0792"/>
<dbReference type="eggNOG" id="COG0773">
    <property type="taxonomic scope" value="Bacteria"/>
</dbReference>
<dbReference type="HOGENOM" id="CLU_028104_2_2_9"/>
<dbReference type="UniPathway" id="UPA00219"/>
<dbReference type="Proteomes" id="UP000001946">
    <property type="component" value="Chromosome"/>
</dbReference>
<dbReference type="GO" id="GO:0005737">
    <property type="term" value="C:cytoplasm"/>
    <property type="evidence" value="ECO:0007669"/>
    <property type="project" value="UniProtKB-SubCell"/>
</dbReference>
<dbReference type="GO" id="GO:0005524">
    <property type="term" value="F:ATP binding"/>
    <property type="evidence" value="ECO:0007669"/>
    <property type="project" value="UniProtKB-UniRule"/>
</dbReference>
<dbReference type="GO" id="GO:0008763">
    <property type="term" value="F:UDP-N-acetylmuramate-L-alanine ligase activity"/>
    <property type="evidence" value="ECO:0007669"/>
    <property type="project" value="UniProtKB-UniRule"/>
</dbReference>
<dbReference type="GO" id="GO:0051301">
    <property type="term" value="P:cell division"/>
    <property type="evidence" value="ECO:0007669"/>
    <property type="project" value="UniProtKB-KW"/>
</dbReference>
<dbReference type="GO" id="GO:0071555">
    <property type="term" value="P:cell wall organization"/>
    <property type="evidence" value="ECO:0007669"/>
    <property type="project" value="UniProtKB-KW"/>
</dbReference>
<dbReference type="GO" id="GO:0009252">
    <property type="term" value="P:peptidoglycan biosynthetic process"/>
    <property type="evidence" value="ECO:0007669"/>
    <property type="project" value="UniProtKB-UniRule"/>
</dbReference>
<dbReference type="GO" id="GO:0008360">
    <property type="term" value="P:regulation of cell shape"/>
    <property type="evidence" value="ECO:0007669"/>
    <property type="project" value="UniProtKB-KW"/>
</dbReference>
<dbReference type="CDD" id="cd01983">
    <property type="entry name" value="SIMIBI"/>
    <property type="match status" value="1"/>
</dbReference>
<dbReference type="Gene3D" id="3.90.190.20">
    <property type="entry name" value="Mur ligase, C-terminal domain"/>
    <property type="match status" value="1"/>
</dbReference>
<dbReference type="Gene3D" id="3.40.1190.10">
    <property type="entry name" value="Mur-like, catalytic domain"/>
    <property type="match status" value="1"/>
</dbReference>
<dbReference type="Gene3D" id="3.40.50.720">
    <property type="entry name" value="NAD(P)-binding Rossmann-like Domain"/>
    <property type="match status" value="1"/>
</dbReference>
<dbReference type="HAMAP" id="MF_00046">
    <property type="entry name" value="MurC"/>
    <property type="match status" value="1"/>
</dbReference>
<dbReference type="InterPro" id="IPR036565">
    <property type="entry name" value="Mur-like_cat_sf"/>
</dbReference>
<dbReference type="InterPro" id="IPR004101">
    <property type="entry name" value="Mur_ligase_C"/>
</dbReference>
<dbReference type="InterPro" id="IPR036615">
    <property type="entry name" value="Mur_ligase_C_dom_sf"/>
</dbReference>
<dbReference type="InterPro" id="IPR013221">
    <property type="entry name" value="Mur_ligase_cen"/>
</dbReference>
<dbReference type="InterPro" id="IPR000713">
    <property type="entry name" value="Mur_ligase_N"/>
</dbReference>
<dbReference type="InterPro" id="IPR050061">
    <property type="entry name" value="MurCDEF_pg_biosynth"/>
</dbReference>
<dbReference type="InterPro" id="IPR005758">
    <property type="entry name" value="UDP-N-AcMur_Ala_ligase_MurC"/>
</dbReference>
<dbReference type="NCBIfam" id="TIGR01082">
    <property type="entry name" value="murC"/>
    <property type="match status" value="1"/>
</dbReference>
<dbReference type="PANTHER" id="PTHR43445:SF3">
    <property type="entry name" value="UDP-N-ACETYLMURAMATE--L-ALANINE LIGASE"/>
    <property type="match status" value="1"/>
</dbReference>
<dbReference type="PANTHER" id="PTHR43445">
    <property type="entry name" value="UDP-N-ACETYLMURAMATE--L-ALANINE LIGASE-RELATED"/>
    <property type="match status" value="1"/>
</dbReference>
<dbReference type="Pfam" id="PF01225">
    <property type="entry name" value="Mur_ligase"/>
    <property type="match status" value="1"/>
</dbReference>
<dbReference type="Pfam" id="PF02875">
    <property type="entry name" value="Mur_ligase_C"/>
    <property type="match status" value="1"/>
</dbReference>
<dbReference type="Pfam" id="PF08245">
    <property type="entry name" value="Mur_ligase_M"/>
    <property type="match status" value="1"/>
</dbReference>
<dbReference type="SUPFAM" id="SSF51984">
    <property type="entry name" value="MurCD N-terminal domain"/>
    <property type="match status" value="1"/>
</dbReference>
<dbReference type="SUPFAM" id="SSF53623">
    <property type="entry name" value="MurD-like peptide ligases, catalytic domain"/>
    <property type="match status" value="1"/>
</dbReference>
<dbReference type="SUPFAM" id="SSF53244">
    <property type="entry name" value="MurD-like peptide ligases, peptide-binding domain"/>
    <property type="match status" value="1"/>
</dbReference>
<keyword id="KW-0067">ATP-binding</keyword>
<keyword id="KW-0131">Cell cycle</keyword>
<keyword id="KW-0132">Cell division</keyword>
<keyword id="KW-0133">Cell shape</keyword>
<keyword id="KW-0961">Cell wall biogenesis/degradation</keyword>
<keyword id="KW-0963">Cytoplasm</keyword>
<keyword id="KW-0436">Ligase</keyword>
<keyword id="KW-0547">Nucleotide-binding</keyword>
<keyword id="KW-0573">Peptidoglycan synthesis</keyword>
<keyword id="KW-1185">Reference proteome</keyword>
<feature type="chain" id="PRO_0000336829" description="UDP-N-acetylmuramate--L-alanine ligase">
    <location>
        <begin position="1"/>
        <end position="449"/>
    </location>
</feature>
<feature type="binding site" evidence="1">
    <location>
        <begin position="110"/>
        <end position="116"/>
    </location>
    <ligand>
        <name>ATP</name>
        <dbReference type="ChEBI" id="CHEBI:30616"/>
    </ligand>
</feature>
<reference key="1">
    <citation type="journal article" date="2006" name="J. Bacteriol.">
        <title>Complete genome sequence of the dehalorespiring bacterium Desulfitobacterium hafniense Y51 and comparison with Dehalococcoides ethenogenes 195.</title>
        <authorList>
            <person name="Nonaka H."/>
            <person name="Keresztes G."/>
            <person name="Shinoda Y."/>
            <person name="Ikenaga Y."/>
            <person name="Abe M."/>
            <person name="Naito K."/>
            <person name="Inatomi K."/>
            <person name="Furukawa K."/>
            <person name="Inui M."/>
            <person name="Yukawa H."/>
        </authorList>
    </citation>
    <scope>NUCLEOTIDE SEQUENCE [LARGE SCALE GENOMIC DNA]</scope>
    <source>
        <strain>Y51</strain>
    </source>
</reference>
<comment type="function">
    <text evidence="1">Cell wall formation.</text>
</comment>
<comment type="catalytic activity">
    <reaction evidence="1">
        <text>UDP-N-acetyl-alpha-D-muramate + L-alanine + ATP = UDP-N-acetyl-alpha-D-muramoyl-L-alanine + ADP + phosphate + H(+)</text>
        <dbReference type="Rhea" id="RHEA:23372"/>
        <dbReference type="ChEBI" id="CHEBI:15378"/>
        <dbReference type="ChEBI" id="CHEBI:30616"/>
        <dbReference type="ChEBI" id="CHEBI:43474"/>
        <dbReference type="ChEBI" id="CHEBI:57972"/>
        <dbReference type="ChEBI" id="CHEBI:70757"/>
        <dbReference type="ChEBI" id="CHEBI:83898"/>
        <dbReference type="ChEBI" id="CHEBI:456216"/>
        <dbReference type="EC" id="6.3.2.8"/>
    </reaction>
</comment>
<comment type="pathway">
    <text evidence="1">Cell wall biogenesis; peptidoglycan biosynthesis.</text>
</comment>
<comment type="subcellular location">
    <subcellularLocation>
        <location evidence="1">Cytoplasm</location>
    </subcellularLocation>
</comment>
<comment type="similarity">
    <text evidence="1">Belongs to the MurCDEF family.</text>
</comment>
<comment type="sequence caution" evidence="2">
    <conflict type="erroneous initiation">
        <sequence resource="EMBL-CDS" id="BAE82581"/>
    </conflict>
</comment>
<gene>
    <name evidence="1" type="primary">murC</name>
    <name type="ordered locus">DSY0792</name>
</gene>
<sequence length="449" mass="49200">MPLHIHFVGIKGTGMSALAQVTAHIEGAHITGSDVPERFFTDAVLERAHIPVLNFSAANVEKADIVVASAAYGENHEEIARARELNIPVYSYPQFLGRLMSKKRGIAVAGTHGKTTTTAMIGLALLQSGIDPTIVVGSDVPSIGGNAYSGQGDFFLAESCEYRRHFLNYSPEYLIITNIEFDHPDYFKDLDDVVCAFSEIAQKIPPHGRIFIWHEDPQRKAIQAQSPIITFGLNEEADVYATNIQFHDEGSTMTIVAHGTVLGEFHLHVSGKHNILNALASIALCLEIGVPTEKVLESLSHFNGTKRRFEHIGQNAGALIVDDYAHHPTEIRSTLEGARLSFPDRRIRAVFQPHTFSRTEKLLQEFSQSFQAADEVVIAEIFASARETNLNTISASSLADLISQQGVNARYIHSLEEIQTYLAQTLSPGDLVLTLGAGDIYKVGQSLVC</sequence>
<evidence type="ECO:0000255" key="1">
    <source>
        <dbReference type="HAMAP-Rule" id="MF_00046"/>
    </source>
</evidence>
<evidence type="ECO:0000305" key="2"/>
<protein>
    <recommendedName>
        <fullName evidence="1">UDP-N-acetylmuramate--L-alanine ligase</fullName>
        <ecNumber evidence="1">6.3.2.8</ecNumber>
    </recommendedName>
    <alternativeName>
        <fullName evidence="1">UDP-N-acetylmuramoyl-L-alanine synthetase</fullName>
    </alternativeName>
</protein>
<accession>Q24ZG1</accession>